<evidence type="ECO:0000255" key="1">
    <source>
        <dbReference type="HAMAP-Rule" id="MF_01710"/>
    </source>
</evidence>
<dbReference type="EC" id="7.-.-.-" evidence="1"/>
<dbReference type="EMBL" id="AP006840">
    <property type="protein sequence ID" value="BAD42026.1"/>
    <property type="molecule type" value="Genomic_DNA"/>
</dbReference>
<dbReference type="RefSeq" id="WP_011197159.1">
    <property type="nucleotide sequence ID" value="NC_006177.1"/>
</dbReference>
<dbReference type="SMR" id="Q67JX4"/>
<dbReference type="STRING" id="292459.STH3044"/>
<dbReference type="KEGG" id="sth:STH3044"/>
<dbReference type="eggNOG" id="COG1122">
    <property type="taxonomic scope" value="Bacteria"/>
</dbReference>
<dbReference type="HOGENOM" id="CLU_000604_1_22_9"/>
<dbReference type="OrthoDB" id="9784332at2"/>
<dbReference type="Proteomes" id="UP000000417">
    <property type="component" value="Chromosome"/>
</dbReference>
<dbReference type="GO" id="GO:0043190">
    <property type="term" value="C:ATP-binding cassette (ABC) transporter complex"/>
    <property type="evidence" value="ECO:0007669"/>
    <property type="project" value="TreeGrafter"/>
</dbReference>
<dbReference type="GO" id="GO:0005524">
    <property type="term" value="F:ATP binding"/>
    <property type="evidence" value="ECO:0007669"/>
    <property type="project" value="UniProtKB-KW"/>
</dbReference>
<dbReference type="GO" id="GO:0016887">
    <property type="term" value="F:ATP hydrolysis activity"/>
    <property type="evidence" value="ECO:0007669"/>
    <property type="project" value="InterPro"/>
</dbReference>
<dbReference type="GO" id="GO:0042626">
    <property type="term" value="F:ATPase-coupled transmembrane transporter activity"/>
    <property type="evidence" value="ECO:0007669"/>
    <property type="project" value="TreeGrafter"/>
</dbReference>
<dbReference type="CDD" id="cd03225">
    <property type="entry name" value="ABC_cobalt_CbiO_domain1"/>
    <property type="match status" value="1"/>
</dbReference>
<dbReference type="FunFam" id="3.40.50.300:FF:000224">
    <property type="entry name" value="Energy-coupling factor transporter ATP-binding protein EcfA"/>
    <property type="match status" value="1"/>
</dbReference>
<dbReference type="Gene3D" id="3.40.50.300">
    <property type="entry name" value="P-loop containing nucleotide triphosphate hydrolases"/>
    <property type="match status" value="1"/>
</dbReference>
<dbReference type="InterPro" id="IPR003593">
    <property type="entry name" value="AAA+_ATPase"/>
</dbReference>
<dbReference type="InterPro" id="IPR003439">
    <property type="entry name" value="ABC_transporter-like_ATP-bd"/>
</dbReference>
<dbReference type="InterPro" id="IPR017871">
    <property type="entry name" value="ABC_transporter-like_CS"/>
</dbReference>
<dbReference type="InterPro" id="IPR015856">
    <property type="entry name" value="ABC_transpr_CbiO/EcfA_su"/>
</dbReference>
<dbReference type="InterPro" id="IPR050095">
    <property type="entry name" value="ECF_ABC_transporter_ATP-bd"/>
</dbReference>
<dbReference type="InterPro" id="IPR030946">
    <property type="entry name" value="EcfA2"/>
</dbReference>
<dbReference type="InterPro" id="IPR027417">
    <property type="entry name" value="P-loop_NTPase"/>
</dbReference>
<dbReference type="NCBIfam" id="TIGR04521">
    <property type="entry name" value="ECF_ATPase_2"/>
    <property type="match status" value="1"/>
</dbReference>
<dbReference type="PANTHER" id="PTHR43553:SF27">
    <property type="entry name" value="ENERGY-COUPLING FACTOR TRANSPORTER ATP-BINDING PROTEIN ECFA2"/>
    <property type="match status" value="1"/>
</dbReference>
<dbReference type="PANTHER" id="PTHR43553">
    <property type="entry name" value="HEAVY METAL TRANSPORTER"/>
    <property type="match status" value="1"/>
</dbReference>
<dbReference type="Pfam" id="PF00005">
    <property type="entry name" value="ABC_tran"/>
    <property type="match status" value="1"/>
</dbReference>
<dbReference type="SMART" id="SM00382">
    <property type="entry name" value="AAA"/>
    <property type="match status" value="1"/>
</dbReference>
<dbReference type="SUPFAM" id="SSF52540">
    <property type="entry name" value="P-loop containing nucleoside triphosphate hydrolases"/>
    <property type="match status" value="1"/>
</dbReference>
<dbReference type="PROSITE" id="PS00211">
    <property type="entry name" value="ABC_TRANSPORTER_1"/>
    <property type="match status" value="1"/>
</dbReference>
<dbReference type="PROSITE" id="PS50893">
    <property type="entry name" value="ABC_TRANSPORTER_2"/>
    <property type="match status" value="1"/>
</dbReference>
<dbReference type="PROSITE" id="PS51246">
    <property type="entry name" value="CBIO"/>
    <property type="match status" value="1"/>
</dbReference>
<gene>
    <name evidence="1" type="primary">ecfA2</name>
    <name type="synonym">cbiO2</name>
    <name type="ordered locus">STH3044</name>
</gene>
<proteinExistence type="inferred from homology"/>
<keyword id="KW-0067">ATP-binding</keyword>
<keyword id="KW-1003">Cell membrane</keyword>
<keyword id="KW-0472">Membrane</keyword>
<keyword id="KW-0547">Nucleotide-binding</keyword>
<keyword id="KW-1185">Reference proteome</keyword>
<keyword id="KW-1278">Translocase</keyword>
<keyword id="KW-0813">Transport</keyword>
<protein>
    <recommendedName>
        <fullName evidence="1">Energy-coupling factor transporter ATP-binding protein EcfA2</fullName>
        <shortName evidence="1">ECF transporter A component EcfA2</shortName>
        <ecNumber evidence="1">7.-.-.-</ecNumber>
    </recommendedName>
</protein>
<reference key="1">
    <citation type="journal article" date="2004" name="Nucleic Acids Res.">
        <title>Genome sequence of Symbiobacterium thermophilum, an uncultivable bacterium that depends on microbial commensalism.</title>
        <authorList>
            <person name="Ueda K."/>
            <person name="Yamashita A."/>
            <person name="Ishikawa J."/>
            <person name="Shimada M."/>
            <person name="Watsuji T."/>
            <person name="Morimura K."/>
            <person name="Ikeda H."/>
            <person name="Hattori M."/>
            <person name="Beppu T."/>
        </authorList>
    </citation>
    <scope>NUCLEOTIDE SEQUENCE [LARGE SCALE GENOMIC DNA]</scope>
    <source>
        <strain>DSM 24528 / JCM 14929 / IAM 14863 / T</strain>
    </source>
</reference>
<organism>
    <name type="scientific">Symbiobacterium thermophilum (strain DSM 24528 / JCM 14929 / IAM 14863 / T)</name>
    <dbReference type="NCBI Taxonomy" id="292459"/>
    <lineage>
        <taxon>Bacteria</taxon>
        <taxon>Bacillati</taxon>
        <taxon>Bacillota</taxon>
        <taxon>Clostridia</taxon>
        <taxon>Eubacteriales</taxon>
        <taxon>Symbiobacteriaceae</taxon>
        <taxon>Symbiobacterium</taxon>
    </lineage>
</organism>
<accession>Q67JX4</accession>
<name>ECFA2_SYMTH</name>
<feature type="chain" id="PRO_0000288015" description="Energy-coupling factor transporter ATP-binding protein EcfA2">
    <location>
        <begin position="1"/>
        <end position="288"/>
    </location>
</feature>
<feature type="domain" description="ABC transporter" evidence="1">
    <location>
        <begin position="3"/>
        <end position="243"/>
    </location>
</feature>
<feature type="binding site" evidence="1">
    <location>
        <begin position="40"/>
        <end position="47"/>
    </location>
    <ligand>
        <name>ATP</name>
        <dbReference type="ChEBI" id="CHEBI:30616"/>
    </ligand>
</feature>
<sequence>MPIVFEAVSHIYQPGTPFAWKALDDVSLTIPDGEFWGIIGPTGSGKSTLIQHMNGLLRPTTGRVLVDGLDLSDRKTDLRKVRQRVGLVFQYPEHQLFGETIFEDVAFGPRNMQLGAAEVERRVMTALERVGLDPAMKDRSPFGLSGGQARRVALAGVLAMEPRVLILDEPTAGLDPQGRREILDLVGGFARTGMTVVLVSHSMDDVAEYADRVLVMHRGRVHMLGTPWELFARRAELEAIGLGVPAAVALADKLRERGWSIPPDVVTMDEAVAAIRGVLAGRKGADRP</sequence>
<comment type="function">
    <text evidence="1">ATP-binding (A) component of a common energy-coupling factor (ECF) ABC-transporter complex. Unlike classic ABC transporters this ECF transporter provides the energy necessary to transport a number of different substrates.</text>
</comment>
<comment type="subunit">
    <text evidence="1">Forms a stable energy-coupling factor (ECF) transporter complex composed of 2 membrane-embedded substrate-binding proteins (S component), 2 ATP-binding proteins (A component) and 2 transmembrane proteins (T component).</text>
</comment>
<comment type="subcellular location">
    <subcellularLocation>
        <location evidence="1">Cell membrane</location>
        <topology evidence="1">Peripheral membrane protein</topology>
    </subcellularLocation>
</comment>
<comment type="similarity">
    <text evidence="1">Belongs to the ABC transporter superfamily. Energy-coupling factor EcfA family.</text>
</comment>